<comment type="function">
    <text>Electron carrier protein. The oxidized form of the cytochrome c heme group can accept an electron from the heme group of the cytochrome c1 subunit of cytochrome reductase. Cytochrome c then transfers this electron to the cytochrome oxidase complex, the final protein carrier in the mitochondrial electron-transport chain.</text>
</comment>
<comment type="subcellular location">
    <subcellularLocation>
        <location>Mitochondrion intermembrane space</location>
    </subcellularLocation>
    <text>Loosely associated with the inner membrane.</text>
</comment>
<comment type="PTM">
    <text>Binds 1 heme c group covalently per subunit.</text>
</comment>
<comment type="similarity">
    <text evidence="3">Belongs to the cytochrome c family.</text>
</comment>
<comment type="online information" name="Protein Spotlight">
    <link uri="https://www.proteinspotlight.org/back_issues/076"/>
    <text>Life shuttle - Issue 76 of November 2006</text>
</comment>
<dbReference type="PIR" id="A00052">
    <property type="entry name" value="CCAB"/>
</dbReference>
<dbReference type="iPTMnet" id="P00059"/>
<dbReference type="GO" id="GO:0005758">
    <property type="term" value="C:mitochondrial intermembrane space"/>
    <property type="evidence" value="ECO:0007669"/>
    <property type="project" value="UniProtKB-SubCell"/>
</dbReference>
<dbReference type="GO" id="GO:0009055">
    <property type="term" value="F:electron transfer activity"/>
    <property type="evidence" value="ECO:0007669"/>
    <property type="project" value="InterPro"/>
</dbReference>
<dbReference type="GO" id="GO:0020037">
    <property type="term" value="F:heme binding"/>
    <property type="evidence" value="ECO:0007669"/>
    <property type="project" value="InterPro"/>
</dbReference>
<dbReference type="GO" id="GO:0046872">
    <property type="term" value="F:metal ion binding"/>
    <property type="evidence" value="ECO:0007669"/>
    <property type="project" value="UniProtKB-KW"/>
</dbReference>
<dbReference type="FunFam" id="1.10.760.10:FF:000001">
    <property type="entry name" value="Cytochrome c iso-1"/>
    <property type="match status" value="1"/>
</dbReference>
<dbReference type="Gene3D" id="1.10.760.10">
    <property type="entry name" value="Cytochrome c-like domain"/>
    <property type="match status" value="1"/>
</dbReference>
<dbReference type="InterPro" id="IPR009056">
    <property type="entry name" value="Cyt_c-like_dom"/>
</dbReference>
<dbReference type="InterPro" id="IPR036909">
    <property type="entry name" value="Cyt_c-like_dom_sf"/>
</dbReference>
<dbReference type="InterPro" id="IPR002327">
    <property type="entry name" value="Cyt_c_1A/1B"/>
</dbReference>
<dbReference type="PANTHER" id="PTHR11961">
    <property type="entry name" value="CYTOCHROME C"/>
    <property type="match status" value="1"/>
</dbReference>
<dbReference type="Pfam" id="PF00034">
    <property type="entry name" value="Cytochrom_C"/>
    <property type="match status" value="1"/>
</dbReference>
<dbReference type="PRINTS" id="PR00604">
    <property type="entry name" value="CYTCHRMECIAB"/>
</dbReference>
<dbReference type="SUPFAM" id="SSF46626">
    <property type="entry name" value="Cytochrome c"/>
    <property type="match status" value="1"/>
</dbReference>
<dbReference type="PROSITE" id="PS51007">
    <property type="entry name" value="CYTC"/>
    <property type="match status" value="1"/>
</dbReference>
<evidence type="ECO:0000255" key="1">
    <source>
        <dbReference type="PROSITE-ProRule" id="PRU00433"/>
    </source>
</evidence>
<evidence type="ECO:0000269" key="2">
    <source>
    </source>
</evidence>
<evidence type="ECO:0000305" key="3"/>
<protein>
    <recommendedName>
        <fullName>Cytochrome c</fullName>
    </recommendedName>
</protein>
<feature type="chain" id="PRO_0000108281" description="Cytochrome c">
    <location>
        <begin position="1"/>
        <end position="111"/>
    </location>
</feature>
<feature type="binding site" description="covalent" evidence="1 2">
    <location>
        <position position="22"/>
    </location>
    <ligand>
        <name>heme c</name>
        <dbReference type="ChEBI" id="CHEBI:61717"/>
    </ligand>
</feature>
<feature type="binding site" description="covalent" evidence="1 2">
    <location>
        <position position="25"/>
    </location>
    <ligand>
        <name>heme c</name>
        <dbReference type="ChEBI" id="CHEBI:61717"/>
    </ligand>
</feature>
<feature type="binding site" description="axial binding residue">
    <location>
        <position position="26"/>
    </location>
    <ligand>
        <name>heme c</name>
        <dbReference type="ChEBI" id="CHEBI:61717"/>
    </ligand>
    <ligandPart>
        <name>Fe</name>
        <dbReference type="ChEBI" id="CHEBI:18248"/>
    </ligandPart>
</feature>
<feature type="binding site" description="axial binding residue">
    <location>
        <position position="88"/>
    </location>
    <ligand>
        <name>heme c</name>
        <dbReference type="ChEBI" id="CHEBI:61717"/>
    </ligand>
    <ligandPart>
        <name>Fe</name>
        <dbReference type="ChEBI" id="CHEBI:18248"/>
    </ligandPart>
</feature>
<feature type="modified residue" description="N-acetylalanine" evidence="2">
    <location>
        <position position="1"/>
    </location>
</feature>
<feature type="modified residue" description="N6,N6,N6-trimethyllysine" evidence="2">
    <location>
        <position position="80"/>
    </location>
</feature>
<feature type="modified residue" description="N6,N6,N6-trimethyllysine" evidence="2">
    <location>
        <position position="94"/>
    </location>
</feature>
<proteinExistence type="evidence at protein level"/>
<accession>P00059</accession>
<name>CYC_ABUTH</name>
<sequence length="111" mass="12037">ASFQZAPPGBAKAGEKIFKTKCAQCHTVEKGAGHKQGPNLNGLFGRQSGTTPGYSYSAANKNMAVNWGENTLYDYLLNPKKYIPGTKMVFPGLKKPQDRADLIAYLKZSTA</sequence>
<reference key="1">
    <citation type="journal article" date="1971" name="Biochem. J.">
        <title>The amino acid sequence of cytochrome c from Abutilon theophrasti Medic. and Gossypium barbadense L. (cotton).</title>
        <authorList>
            <person name="Thompson E.W."/>
            <person name="Notton B.A."/>
            <person name="Richardson M."/>
            <person name="Boulter D."/>
        </authorList>
    </citation>
    <scope>PROTEIN SEQUENCE</scope>
    <scope>ACETYLATION AT ALA-1</scope>
    <scope>METHYLATION AT LYS-80 AND LYS-94</scope>
</reference>
<organism>
    <name type="scientific">Abutilon theophrasti</name>
    <name type="common">Velvet-leaf</name>
    <name type="synonym">Sida abutilon</name>
    <dbReference type="NCBI Taxonomy" id="3631"/>
    <lineage>
        <taxon>Eukaryota</taxon>
        <taxon>Viridiplantae</taxon>
        <taxon>Streptophyta</taxon>
        <taxon>Embryophyta</taxon>
        <taxon>Tracheophyta</taxon>
        <taxon>Spermatophyta</taxon>
        <taxon>Magnoliopsida</taxon>
        <taxon>eudicotyledons</taxon>
        <taxon>Gunneridae</taxon>
        <taxon>Pentapetalae</taxon>
        <taxon>rosids</taxon>
        <taxon>malvids</taxon>
        <taxon>Malvales</taxon>
        <taxon>Malvaceae</taxon>
        <taxon>Malvoideae</taxon>
        <taxon>Abutilon</taxon>
    </lineage>
</organism>
<keyword id="KW-0007">Acetylation</keyword>
<keyword id="KW-0903">Direct protein sequencing</keyword>
<keyword id="KW-0249">Electron transport</keyword>
<keyword id="KW-0349">Heme</keyword>
<keyword id="KW-0408">Iron</keyword>
<keyword id="KW-0479">Metal-binding</keyword>
<keyword id="KW-0488">Methylation</keyword>
<keyword id="KW-0496">Mitochondrion</keyword>
<keyword id="KW-0679">Respiratory chain</keyword>
<keyword id="KW-0813">Transport</keyword>